<proteinExistence type="evidence at transcript level"/>
<accession>O42164</accession>
<dbReference type="EMBL" id="AF012727">
    <property type="protein sequence ID" value="AAC60368.1"/>
    <property type="molecule type" value="mRNA"/>
</dbReference>
<dbReference type="EMBL" id="AF082500">
    <property type="protein sequence ID" value="AAC32380.1"/>
    <property type="molecule type" value="mRNA"/>
</dbReference>
<dbReference type="SMR" id="O42164"/>
<dbReference type="FunCoup" id="O42164">
    <property type="interactions" value="96"/>
</dbReference>
<dbReference type="InParanoid" id="O42164"/>
<dbReference type="PhylomeDB" id="O42164"/>
<dbReference type="Proteomes" id="UP000000539">
    <property type="component" value="Unassembled WGS sequence"/>
</dbReference>
<dbReference type="GO" id="GO:0005615">
    <property type="term" value="C:extracellular space"/>
    <property type="evidence" value="ECO:0000314"/>
    <property type="project" value="AgBase"/>
</dbReference>
<dbReference type="GO" id="GO:0005179">
    <property type="term" value="F:hormone activity"/>
    <property type="evidence" value="ECO:0000318"/>
    <property type="project" value="GO_Central"/>
</dbReference>
<dbReference type="GO" id="GO:0051428">
    <property type="term" value="F:peptide hormone receptor binding"/>
    <property type="evidence" value="ECO:0000318"/>
    <property type="project" value="GO_Central"/>
</dbReference>
<dbReference type="GO" id="GO:0044320">
    <property type="term" value="P:cellular response to leptin stimulus"/>
    <property type="evidence" value="ECO:0000314"/>
    <property type="project" value="AgBase"/>
</dbReference>
<dbReference type="GO" id="GO:0006112">
    <property type="term" value="P:energy reserve metabolic process"/>
    <property type="evidence" value="ECO:0000318"/>
    <property type="project" value="GO_Central"/>
</dbReference>
<dbReference type="GO" id="GO:0006629">
    <property type="term" value="P:lipid metabolic process"/>
    <property type="evidence" value="ECO:0000318"/>
    <property type="project" value="GO_Central"/>
</dbReference>
<dbReference type="GO" id="GO:0043066">
    <property type="term" value="P:negative regulation of apoptotic process"/>
    <property type="evidence" value="ECO:0000314"/>
    <property type="project" value="AgBase"/>
</dbReference>
<dbReference type="GO" id="GO:0032099">
    <property type="term" value="P:negative regulation of appetite"/>
    <property type="evidence" value="ECO:0000314"/>
    <property type="project" value="AgBase"/>
</dbReference>
<dbReference type="GO" id="GO:0038108">
    <property type="term" value="P:negative regulation of appetite by leptin-mediated signaling pathway"/>
    <property type="evidence" value="ECO:0000318"/>
    <property type="project" value="GO_Central"/>
</dbReference>
<dbReference type="GO" id="GO:0010629">
    <property type="term" value="P:negative regulation of gene expression"/>
    <property type="evidence" value="ECO:0000314"/>
    <property type="project" value="AgBase"/>
</dbReference>
<dbReference type="GO" id="GO:0001552">
    <property type="term" value="P:ovarian follicle atresia"/>
    <property type="evidence" value="ECO:0000314"/>
    <property type="project" value="AgBase"/>
</dbReference>
<dbReference type="GO" id="GO:0006909">
    <property type="term" value="P:phagocytosis"/>
    <property type="evidence" value="ECO:0000250"/>
    <property type="project" value="UniProtKB"/>
</dbReference>
<dbReference type="GO" id="GO:2000866">
    <property type="term" value="P:positive regulation of estradiol secretion"/>
    <property type="evidence" value="ECO:0000314"/>
    <property type="project" value="AgBase"/>
</dbReference>
<dbReference type="GO" id="GO:2000196">
    <property type="term" value="P:positive regulation of female gonad development"/>
    <property type="evidence" value="ECO:0000314"/>
    <property type="project" value="AgBase"/>
</dbReference>
<dbReference type="GO" id="GO:0032735">
    <property type="term" value="P:positive regulation of interleukin-12 production"/>
    <property type="evidence" value="ECO:0000250"/>
    <property type="project" value="UniProtKB"/>
</dbReference>
<dbReference type="GO" id="GO:0032755">
    <property type="term" value="P:positive regulation of interleukin-6 production"/>
    <property type="evidence" value="ECO:0000250"/>
    <property type="project" value="UniProtKB"/>
</dbReference>
<dbReference type="GO" id="GO:0033686">
    <property type="term" value="P:positive regulation of luteinizing hormone secretion"/>
    <property type="evidence" value="ECO:0000314"/>
    <property type="project" value="AgBase"/>
</dbReference>
<dbReference type="GO" id="GO:1900745">
    <property type="term" value="P:positive regulation of p38MAPK cascade"/>
    <property type="evidence" value="ECO:0000318"/>
    <property type="project" value="GO_Central"/>
</dbReference>
<dbReference type="GO" id="GO:0051897">
    <property type="term" value="P:positive regulation of phosphatidylinositol 3-kinase/protein kinase B signal transduction"/>
    <property type="evidence" value="ECO:0000318"/>
    <property type="project" value="GO_Central"/>
</dbReference>
<dbReference type="GO" id="GO:2000872">
    <property type="term" value="P:positive regulation of progesterone secretion"/>
    <property type="evidence" value="ECO:0000314"/>
    <property type="project" value="AgBase"/>
</dbReference>
<dbReference type="GO" id="GO:0046427">
    <property type="term" value="P:positive regulation of receptor signaling pathway via JAK-STAT"/>
    <property type="evidence" value="ECO:0000318"/>
    <property type="project" value="GO_Central"/>
</dbReference>
<dbReference type="GO" id="GO:0032008">
    <property type="term" value="P:positive regulation of TOR signaling"/>
    <property type="evidence" value="ECO:0000318"/>
    <property type="project" value="GO_Central"/>
</dbReference>
<dbReference type="GO" id="GO:0032760">
    <property type="term" value="P:positive regulation of tumor necrosis factor production"/>
    <property type="evidence" value="ECO:0000250"/>
    <property type="project" value="UniProtKB"/>
</dbReference>
<dbReference type="GO" id="GO:0032868">
    <property type="term" value="P:response to insulin"/>
    <property type="evidence" value="ECO:0000318"/>
    <property type="project" value="GO_Central"/>
</dbReference>
<dbReference type="FunFam" id="1.20.1250.10:FF:000008">
    <property type="entry name" value="Leptin"/>
    <property type="match status" value="1"/>
</dbReference>
<dbReference type="Gene3D" id="1.20.1250.10">
    <property type="match status" value="1"/>
</dbReference>
<dbReference type="InterPro" id="IPR009079">
    <property type="entry name" value="4_helix_cytokine-like_core"/>
</dbReference>
<dbReference type="InterPro" id="IPR000065">
    <property type="entry name" value="Leptin"/>
</dbReference>
<dbReference type="PANTHER" id="PTHR11724">
    <property type="entry name" value="LEPTIN"/>
    <property type="match status" value="1"/>
</dbReference>
<dbReference type="PANTHER" id="PTHR11724:SF1">
    <property type="entry name" value="LEPTIN"/>
    <property type="match status" value="1"/>
</dbReference>
<dbReference type="Pfam" id="PF02024">
    <property type="entry name" value="Leptin"/>
    <property type="match status" value="1"/>
</dbReference>
<dbReference type="PIRSF" id="PIRSF001837">
    <property type="entry name" value="Leptin"/>
    <property type="match status" value="1"/>
</dbReference>
<dbReference type="PRINTS" id="PR00495">
    <property type="entry name" value="LEPTIN"/>
</dbReference>
<dbReference type="SUPFAM" id="SSF47266">
    <property type="entry name" value="4-helical cytokines"/>
    <property type="match status" value="1"/>
</dbReference>
<gene>
    <name type="primary">LEP</name>
    <name type="synonym">OB</name>
</gene>
<reference key="1">
    <citation type="journal article" date="1998" name="Gene">
        <title>Cloning the chicken leptin gene.</title>
        <authorList>
            <person name="Taouis M."/>
            <person name="Chen J.W."/>
            <person name="Daviaud C."/>
            <person name="Dupont J."/>
            <person name="Derouet M."/>
            <person name="Simon J."/>
        </authorList>
    </citation>
    <scope>NUCLEOTIDE SEQUENCE [MRNA]</scope>
    <scope>TISSUE SPECIFICITY</scope>
    <source>
        <strain>Broiler</strain>
        <tissue>Liver</tissue>
    </source>
</reference>
<reference key="2">
    <citation type="submission" date="1998-08" db="EMBL/GenBank/DDBJ databases">
        <title>Chicken leptin (ob) mRNA, complete cds.</title>
        <authorList>
            <person name="Ashwell C.M."/>
            <person name="Czerwinski S.M."/>
            <person name="McMurtry J.P."/>
        </authorList>
    </citation>
    <scope>NUCLEOTIDE SEQUENCE [MRNA]</scope>
    <source>
        <strain>Shaver</strain>
        <tissue>Adipose tissue</tissue>
        <tissue>Liver</tissue>
    </source>
</reference>
<name>LEP_CHICK</name>
<keyword id="KW-1015">Disulfide bond</keyword>
<keyword id="KW-0550">Obesity</keyword>
<keyword id="KW-1185">Reference proteome</keyword>
<keyword id="KW-0964">Secreted</keyword>
<keyword id="KW-0732">Signal</keyword>
<organism>
    <name type="scientific">Gallus gallus</name>
    <name type="common">Chicken</name>
    <dbReference type="NCBI Taxonomy" id="9031"/>
    <lineage>
        <taxon>Eukaryota</taxon>
        <taxon>Metazoa</taxon>
        <taxon>Chordata</taxon>
        <taxon>Craniata</taxon>
        <taxon>Vertebrata</taxon>
        <taxon>Euteleostomi</taxon>
        <taxon>Archelosauria</taxon>
        <taxon>Archosauria</taxon>
        <taxon>Dinosauria</taxon>
        <taxon>Saurischia</taxon>
        <taxon>Theropoda</taxon>
        <taxon>Coelurosauria</taxon>
        <taxon>Aves</taxon>
        <taxon>Neognathae</taxon>
        <taxon>Galloanserae</taxon>
        <taxon>Galliformes</taxon>
        <taxon>Phasianidae</taxon>
        <taxon>Phasianinae</taxon>
        <taxon>Gallus</taxon>
    </lineage>
</organism>
<protein>
    <recommendedName>
        <fullName>Leptin</fullName>
    </recommendedName>
    <alternativeName>
        <fullName>Obesity factor</fullName>
    </alternativeName>
</protein>
<evidence type="ECO:0000250" key="1"/>
<evidence type="ECO:0000250" key="2">
    <source>
        <dbReference type="UniProtKB" id="P41159"/>
    </source>
</evidence>
<evidence type="ECO:0000255" key="3"/>
<evidence type="ECO:0000269" key="4">
    <source>
    </source>
</evidence>
<evidence type="ECO:0000305" key="5"/>
<feature type="signal peptide" evidence="3">
    <location>
        <begin position="1"/>
        <end position="18"/>
    </location>
</feature>
<feature type="chain" id="PRO_0000017692" description="Leptin">
    <location>
        <begin position="19"/>
        <end position="163"/>
    </location>
</feature>
<feature type="disulfide bond" evidence="1">
    <location>
        <begin position="113"/>
        <end position="163"/>
    </location>
</feature>
<comment type="function">
    <text evidence="2">Key player in the regulation of energy balance and body weight control. Once released into the circulation, has central and peripheral effects by binding LEPR, found in many tissues, which results in the activation of several major signaling pathways.</text>
</comment>
<comment type="subcellular location">
    <subcellularLocation>
        <location evidence="5">Secreted</location>
    </subcellularLocation>
</comment>
<comment type="tissue specificity">
    <text evidence="4">Not exclusively localized in adipose tissue but is also expressed in liver.</text>
</comment>
<comment type="similarity">
    <text evidence="5">Belongs to the leptin family.</text>
</comment>
<sequence>MCWRPLCRLWSYLVYVQAVPCQIFQDDTKTLIKTIVTRINDISHTSVSAKQRVTGLDFIPGLHPILSLSKMDQTLAVYQQVLTSLPSQNVLQIANDLENLRDLLHLLAFSKSCSLPQTSGLQKPESLDGVLEASLYSTEVVALSRLQGSLQDILQQLDISPEC</sequence>